<evidence type="ECO:0000255" key="1">
    <source>
        <dbReference type="HAMAP-Rule" id="MF_01202"/>
    </source>
</evidence>
<keyword id="KW-0274">FAD</keyword>
<keyword id="KW-0285">Flavoprotein</keyword>
<keyword id="KW-0560">Oxidoreductase</keyword>
<accession>A7ZZC3</accession>
<gene>
    <name evidence="1" type="primary">dadA</name>
    <name type="ordered locus">EcHS_A1292</name>
</gene>
<comment type="function">
    <text evidence="1">Oxidative deamination of D-amino acids.</text>
</comment>
<comment type="catalytic activity">
    <reaction evidence="1">
        <text>a D-alpha-amino acid + A + H2O = a 2-oxocarboxylate + AH2 + NH4(+)</text>
        <dbReference type="Rhea" id="RHEA:18125"/>
        <dbReference type="ChEBI" id="CHEBI:13193"/>
        <dbReference type="ChEBI" id="CHEBI:15377"/>
        <dbReference type="ChEBI" id="CHEBI:17499"/>
        <dbReference type="ChEBI" id="CHEBI:28938"/>
        <dbReference type="ChEBI" id="CHEBI:35179"/>
        <dbReference type="ChEBI" id="CHEBI:59871"/>
    </reaction>
</comment>
<comment type="cofactor">
    <cofactor evidence="1">
        <name>FAD</name>
        <dbReference type="ChEBI" id="CHEBI:57692"/>
    </cofactor>
</comment>
<comment type="pathway">
    <text>Amino-acid degradation; D-alanine degradation; NH(3) and pyruvate from D-alanine: step 1/1.</text>
</comment>
<comment type="similarity">
    <text evidence="1">Belongs to the DadA oxidoreductase family.</text>
</comment>
<protein>
    <recommendedName>
        <fullName evidence="1">D-amino acid dehydrogenase</fullName>
        <ecNumber evidence="1">1.4.99.-</ecNumber>
    </recommendedName>
</protein>
<organism>
    <name type="scientific">Escherichia coli O9:H4 (strain HS)</name>
    <dbReference type="NCBI Taxonomy" id="331112"/>
    <lineage>
        <taxon>Bacteria</taxon>
        <taxon>Pseudomonadati</taxon>
        <taxon>Pseudomonadota</taxon>
        <taxon>Gammaproteobacteria</taxon>
        <taxon>Enterobacterales</taxon>
        <taxon>Enterobacteriaceae</taxon>
        <taxon>Escherichia</taxon>
    </lineage>
</organism>
<proteinExistence type="inferred from homology"/>
<dbReference type="EC" id="1.4.99.-" evidence="1"/>
<dbReference type="EMBL" id="CP000802">
    <property type="protein sequence ID" value="ABV05627.1"/>
    <property type="molecule type" value="Genomic_DNA"/>
</dbReference>
<dbReference type="RefSeq" id="WP_001266908.1">
    <property type="nucleotide sequence ID" value="NC_009800.1"/>
</dbReference>
<dbReference type="SMR" id="A7ZZC3"/>
<dbReference type="GeneID" id="93776243"/>
<dbReference type="KEGG" id="ecx:EcHS_A1292"/>
<dbReference type="HOGENOM" id="CLU_007884_9_2_6"/>
<dbReference type="UniPathway" id="UPA00043">
    <property type="reaction ID" value="UER00498"/>
</dbReference>
<dbReference type="GO" id="GO:0005737">
    <property type="term" value="C:cytoplasm"/>
    <property type="evidence" value="ECO:0007669"/>
    <property type="project" value="TreeGrafter"/>
</dbReference>
<dbReference type="GO" id="GO:0005886">
    <property type="term" value="C:plasma membrane"/>
    <property type="evidence" value="ECO:0007669"/>
    <property type="project" value="TreeGrafter"/>
</dbReference>
<dbReference type="GO" id="GO:0008718">
    <property type="term" value="F:D-amino-acid dehydrogenase activity"/>
    <property type="evidence" value="ECO:0007669"/>
    <property type="project" value="UniProtKB-UniRule"/>
</dbReference>
<dbReference type="GO" id="GO:0055130">
    <property type="term" value="P:D-alanine catabolic process"/>
    <property type="evidence" value="ECO:0007669"/>
    <property type="project" value="UniProtKB-UniPathway"/>
</dbReference>
<dbReference type="FunFam" id="3.50.50.60:FF:000020">
    <property type="entry name" value="D-amino acid dehydrogenase"/>
    <property type="match status" value="1"/>
</dbReference>
<dbReference type="Gene3D" id="3.30.9.10">
    <property type="entry name" value="D-Amino Acid Oxidase, subunit A, domain 2"/>
    <property type="match status" value="1"/>
</dbReference>
<dbReference type="Gene3D" id="3.50.50.60">
    <property type="entry name" value="FAD/NAD(P)-binding domain"/>
    <property type="match status" value="2"/>
</dbReference>
<dbReference type="HAMAP" id="MF_01202">
    <property type="entry name" value="DadA"/>
    <property type="match status" value="1"/>
</dbReference>
<dbReference type="InterPro" id="IPR023080">
    <property type="entry name" value="DadA"/>
</dbReference>
<dbReference type="InterPro" id="IPR006076">
    <property type="entry name" value="FAD-dep_OxRdtase"/>
</dbReference>
<dbReference type="InterPro" id="IPR036188">
    <property type="entry name" value="FAD/NAD-bd_sf"/>
</dbReference>
<dbReference type="NCBIfam" id="NF001933">
    <property type="entry name" value="PRK00711.1"/>
    <property type="match status" value="1"/>
</dbReference>
<dbReference type="PANTHER" id="PTHR13847:SF280">
    <property type="entry name" value="D-AMINO ACID DEHYDROGENASE"/>
    <property type="match status" value="1"/>
</dbReference>
<dbReference type="PANTHER" id="PTHR13847">
    <property type="entry name" value="SARCOSINE DEHYDROGENASE-RELATED"/>
    <property type="match status" value="1"/>
</dbReference>
<dbReference type="Pfam" id="PF01266">
    <property type="entry name" value="DAO"/>
    <property type="match status" value="1"/>
</dbReference>
<dbReference type="SUPFAM" id="SSF54373">
    <property type="entry name" value="FAD-linked reductases, C-terminal domain"/>
    <property type="match status" value="1"/>
</dbReference>
<dbReference type="SUPFAM" id="SSF51905">
    <property type="entry name" value="FAD/NAD(P)-binding domain"/>
    <property type="match status" value="1"/>
</dbReference>
<sequence length="432" mass="47607">MRVVILGSGVVGVASAWYLNQAGHEVTVIDREPGAALETSAANAGQISPGYAAPWAAPGVPLKAIKWMFQRHAPLAVRLDGTQFQLKWMWQMLRNCDTSHYMENKGRMVRLAEYSRDCLKALRAETNIQYEGRQGGTLQLFRTEQQYENATRDIAVLEDAGVPYQLLESSRLAEVEPALAEVAHKLTGGLQLPNDETGDCQLFTQNLARMAEQAGVKFRFNTPVDQLLCDGEQIYGVKCGDEVIKADAYVMAFGSYSTAMLKGIVDIPVYPLKGYSLTIPIAQEDGAPVSTILDETYKIAITRFDNRIRVGGMAEIVGFNTELLQPRRETLEMVVRDLYPRGGHVEQATFWTGLRPMTPDGTPVVGRTRFKNLWLNTGHGTLGWTMACGSGQLLSDLLSGRTPAIPYEDLSVARYSRGFTPSRPGHLHGAHS</sequence>
<name>DADA_ECOHS</name>
<feature type="chain" id="PRO_1000066091" description="D-amino acid dehydrogenase">
    <location>
        <begin position="1"/>
        <end position="432"/>
    </location>
</feature>
<feature type="binding site" evidence="1">
    <location>
        <begin position="3"/>
        <end position="17"/>
    </location>
    <ligand>
        <name>FAD</name>
        <dbReference type="ChEBI" id="CHEBI:57692"/>
    </ligand>
</feature>
<reference key="1">
    <citation type="journal article" date="2008" name="J. Bacteriol.">
        <title>The pangenome structure of Escherichia coli: comparative genomic analysis of E. coli commensal and pathogenic isolates.</title>
        <authorList>
            <person name="Rasko D.A."/>
            <person name="Rosovitz M.J."/>
            <person name="Myers G.S.A."/>
            <person name="Mongodin E.F."/>
            <person name="Fricke W.F."/>
            <person name="Gajer P."/>
            <person name="Crabtree J."/>
            <person name="Sebaihia M."/>
            <person name="Thomson N.R."/>
            <person name="Chaudhuri R."/>
            <person name="Henderson I.R."/>
            <person name="Sperandio V."/>
            <person name="Ravel J."/>
        </authorList>
    </citation>
    <scope>NUCLEOTIDE SEQUENCE [LARGE SCALE GENOMIC DNA]</scope>
    <source>
        <strain>HS</strain>
    </source>
</reference>